<protein>
    <recommendedName>
        <fullName evidence="1">UPF0303 protein YPN_2129</fullName>
    </recommendedName>
</protein>
<reference key="1">
    <citation type="journal article" date="2006" name="J. Bacteriol.">
        <title>Complete genome sequence of Yersinia pestis strains Antiqua and Nepal516: evidence of gene reduction in an emerging pathogen.</title>
        <authorList>
            <person name="Chain P.S.G."/>
            <person name="Hu P."/>
            <person name="Malfatti S.A."/>
            <person name="Radnedge L."/>
            <person name="Larimer F."/>
            <person name="Vergez L.M."/>
            <person name="Worsham P."/>
            <person name="Chu M.C."/>
            <person name="Andersen G.L."/>
        </authorList>
    </citation>
    <scope>NUCLEOTIDE SEQUENCE [LARGE SCALE GENOMIC DNA]</scope>
    <source>
        <strain>Nepal516</strain>
    </source>
</reference>
<reference key="2">
    <citation type="submission" date="2009-04" db="EMBL/GenBank/DDBJ databases">
        <title>Yersinia pestis Nepal516A whole genome shotgun sequencing project.</title>
        <authorList>
            <person name="Plunkett G. III"/>
            <person name="Anderson B.D."/>
            <person name="Baumler D.J."/>
            <person name="Burland V."/>
            <person name="Cabot E.L."/>
            <person name="Glasner J.D."/>
            <person name="Mau B."/>
            <person name="Neeno-Eckwall E."/>
            <person name="Perna N.T."/>
            <person name="Munk A.C."/>
            <person name="Tapia R."/>
            <person name="Green L.D."/>
            <person name="Rogers Y.C."/>
            <person name="Detter J.C."/>
            <person name="Bruce D.C."/>
            <person name="Brettin T.S."/>
        </authorList>
    </citation>
    <scope>NUCLEOTIDE SEQUENCE [LARGE SCALE GENOMIC DNA]</scope>
    <source>
        <strain>Nepal516</strain>
    </source>
</reference>
<feature type="chain" id="PRO_1000046756" description="UPF0303 protein YPN_2129">
    <location>
        <begin position="1"/>
        <end position="171"/>
    </location>
</feature>
<sequence>MNLQQQLAYCQQHQQRLQLRHFDNETAWQLGEKIKRQAEKQGVALAIDITVNHQTLFSYAMAGTCAENQDWLRRKRNVVELLSTSSYAAGLMLQQRETSLDARYGVSLRDYAALGGAFPLQIKQAGIIGSVNVSGAPHLDDHNLLLQVLADFVGLPTGSIELLTPLTPLSA</sequence>
<gene>
    <name type="ordered locus">YPN_2129</name>
    <name type="ORF">YP516_2374</name>
</gene>
<comment type="similarity">
    <text evidence="1">Belongs to the UPF0303 family.</text>
</comment>
<evidence type="ECO:0000255" key="1">
    <source>
        <dbReference type="HAMAP-Rule" id="MF_00761"/>
    </source>
</evidence>
<proteinExistence type="inferred from homology"/>
<accession>Q1CHS2</accession>
<accession>C4GV49</accession>
<dbReference type="EMBL" id="CP000305">
    <property type="protein sequence ID" value="ABG18458.1"/>
    <property type="molecule type" value="Genomic_DNA"/>
</dbReference>
<dbReference type="EMBL" id="ACNQ01000013">
    <property type="protein sequence ID" value="EEO76177.1"/>
    <property type="molecule type" value="Genomic_DNA"/>
</dbReference>
<dbReference type="RefSeq" id="WP_002210255.1">
    <property type="nucleotide sequence ID" value="NZ_ACNQ01000013.1"/>
</dbReference>
<dbReference type="SMR" id="Q1CHS2"/>
<dbReference type="KEGG" id="ypn:YPN_2129"/>
<dbReference type="HOGENOM" id="CLU_101036_2_2_6"/>
<dbReference type="Proteomes" id="UP000008936">
    <property type="component" value="Chromosome"/>
</dbReference>
<dbReference type="FunFam" id="3.30.450.150:FF:000003">
    <property type="entry name" value="UPF0303 protein YPTS_2661"/>
    <property type="match status" value="1"/>
</dbReference>
<dbReference type="Gene3D" id="3.30.450.150">
    <property type="entry name" value="Haem-degrading domain"/>
    <property type="match status" value="1"/>
</dbReference>
<dbReference type="HAMAP" id="MF_00761">
    <property type="entry name" value="UPF0303"/>
    <property type="match status" value="1"/>
</dbReference>
<dbReference type="InterPro" id="IPR005624">
    <property type="entry name" value="PduO/GlcC-like"/>
</dbReference>
<dbReference type="InterPro" id="IPR038084">
    <property type="entry name" value="PduO/GlcC-like_sf"/>
</dbReference>
<dbReference type="InterPro" id="IPR010371">
    <property type="entry name" value="YBR137W-like"/>
</dbReference>
<dbReference type="NCBIfam" id="NF002694">
    <property type="entry name" value="PRK02487.1-3"/>
    <property type="match status" value="1"/>
</dbReference>
<dbReference type="NCBIfam" id="NF002696">
    <property type="entry name" value="PRK02487.1-5"/>
    <property type="match status" value="1"/>
</dbReference>
<dbReference type="PANTHER" id="PTHR28255">
    <property type="match status" value="1"/>
</dbReference>
<dbReference type="PANTHER" id="PTHR28255:SF1">
    <property type="entry name" value="UPF0303 PROTEIN YBR137W"/>
    <property type="match status" value="1"/>
</dbReference>
<dbReference type="Pfam" id="PF03928">
    <property type="entry name" value="HbpS-like"/>
    <property type="match status" value="1"/>
</dbReference>
<dbReference type="PIRSF" id="PIRSF008757">
    <property type="entry name" value="UCP008757"/>
    <property type="match status" value="1"/>
</dbReference>
<dbReference type="SUPFAM" id="SSF143744">
    <property type="entry name" value="GlcG-like"/>
    <property type="match status" value="1"/>
</dbReference>
<organism>
    <name type="scientific">Yersinia pestis bv. Antiqua (strain Nepal516)</name>
    <dbReference type="NCBI Taxonomy" id="377628"/>
    <lineage>
        <taxon>Bacteria</taxon>
        <taxon>Pseudomonadati</taxon>
        <taxon>Pseudomonadota</taxon>
        <taxon>Gammaproteobacteria</taxon>
        <taxon>Enterobacterales</taxon>
        <taxon>Yersiniaceae</taxon>
        <taxon>Yersinia</taxon>
    </lineage>
</organism>
<name>Y2129_YERPN</name>